<sequence length="100" mass="11332">MRKMMQREVTYTTAQLARMKMVDGEVTAEVLEPVTLIGNLSVEQAQREINKRSEFKENPAQVVGVEANTQLYELPLDVFLEHATVKERPATKEEVAEVQA</sequence>
<keyword id="KW-0226">DNA condensation</keyword>
<keyword id="KW-0235">DNA replication</keyword>
<keyword id="KW-0238">DNA-binding</keyword>
<keyword id="KW-0244">Early protein</keyword>
<keyword id="KW-1185">Reference proteome</keyword>
<keyword id="KW-0678">Repressor</keyword>
<keyword id="KW-0804">Transcription</keyword>
<keyword id="KW-0805">Transcription regulation</keyword>
<keyword id="KW-1194">Viral DNA replication</keyword>
<name>NP_BPNF</name>
<proteinExistence type="inferred from homology"/>
<accession>B7SSM6</accession>
<evidence type="ECO:0000250" key="1">
    <source>
        <dbReference type="UniProtKB" id="P03685"/>
    </source>
</evidence>
<evidence type="ECO:0000312" key="2">
    <source>
        <dbReference type="EMBL" id="ACH57073.1"/>
    </source>
</evidence>
<comment type="function">
    <text evidence="1">Histone-like nucleoprotein that binds to the viral dsDNA and responsible for wrapping and condensing the viral DNA about 4-fold. Forms a nucleoprotein complex in which the DNA adopts a right-handed toroidal conformation winding around a protein core. Binding specificity for the viral genome is based on supercoiling. The formation of the nucleoprotein complex at the genome ends, for which the binding affinity is highest, activates the initiation of viral DNA replication. The binding of p6 would recruit the complex formed by the TP and the DNA polymerase to the origin. Protein p6 is also involved in the early to late transcription switch.</text>
</comment>
<comment type="subunit">
    <text evidence="1">Homodimer. Homomultimer. Binds to double-stranded DNA giving rise to multimeric nucleoprotein complexes.</text>
</comment>
<protein>
    <recommendedName>
        <fullName>Double-stranded DNA-binding protein</fullName>
    </recommendedName>
    <alternativeName>
        <fullName>Gene product 6</fullName>
        <shortName>gp6</shortName>
    </alternativeName>
    <alternativeName>
        <fullName>Nucleoid-associated protein p6</fullName>
    </alternativeName>
    <alternativeName>
        <fullName>Protein p6</fullName>
    </alternativeName>
</protein>
<gene>
    <name evidence="2" type="primary">6</name>
</gene>
<organism>
    <name type="scientific">Bacillus phage Nf</name>
    <name type="common">Bacteriophage Nf</name>
    <dbReference type="NCBI Taxonomy" id="2992639"/>
    <lineage>
        <taxon>Viruses</taxon>
        <taxon>Duplodnaviria</taxon>
        <taxon>Heunggongvirae</taxon>
        <taxon>Uroviricota</taxon>
        <taxon>Caudoviricetes</taxon>
        <taxon>Salasmaviridae</taxon>
        <taxon>Picovirinae</taxon>
        <taxon>Beecentumtrevirus</taxon>
        <taxon>Beecentumtrevirus Nf</taxon>
    </lineage>
</organism>
<feature type="chain" id="PRO_0000436077" description="Double-stranded DNA-binding protein">
    <location>
        <begin position="1"/>
        <end position="100"/>
    </location>
</feature>
<feature type="DNA-binding region" evidence="1">
    <location>
        <begin position="1"/>
        <end position="19"/>
    </location>
</feature>
<reference key="1">
    <citation type="journal article" date="2009" name="Environ. Microbiol.">
        <title>Different responses to Spo0A-mediated suppression of the related Bacillus subtilis phages Nf and phi29.</title>
        <authorList>
            <person name="Castilla-Llorente V."/>
            <person name="Salas M."/>
            <person name="Meijer W.J."/>
        </authorList>
    </citation>
    <scope>NUCLEOTIDE SEQUENCE [GENOMIC DNA]</scope>
</reference>
<organismHost>
    <name type="scientific">Bacillus subtilis</name>
    <dbReference type="NCBI Taxonomy" id="1423"/>
</organismHost>
<dbReference type="EMBL" id="EU622808">
    <property type="protein sequence ID" value="ACH57073.1"/>
    <property type="molecule type" value="Genomic_DNA"/>
</dbReference>
<dbReference type="RefSeq" id="YP_009910722.1">
    <property type="nucleotide sequence ID" value="NC_049976.1"/>
</dbReference>
<dbReference type="SMR" id="B7SSM6"/>
<dbReference type="GeneID" id="56239443"/>
<dbReference type="Proteomes" id="UP000000744">
    <property type="component" value="Segment"/>
</dbReference>
<dbReference type="GO" id="GO:0003677">
    <property type="term" value="F:DNA binding"/>
    <property type="evidence" value="ECO:0007669"/>
    <property type="project" value="UniProtKB-KW"/>
</dbReference>
<dbReference type="GO" id="GO:0030261">
    <property type="term" value="P:chromosome condensation"/>
    <property type="evidence" value="ECO:0007669"/>
    <property type="project" value="UniProtKB-KW"/>
</dbReference>
<dbReference type="GO" id="GO:0006260">
    <property type="term" value="P:DNA replication"/>
    <property type="evidence" value="ECO:0007669"/>
    <property type="project" value="UniProtKB-KW"/>
</dbReference>
<dbReference type="GO" id="GO:0039693">
    <property type="term" value="P:viral DNA genome replication"/>
    <property type="evidence" value="ECO:0007669"/>
    <property type="project" value="UniProtKB-KW"/>
</dbReference>
<dbReference type="InterPro" id="IPR035188">
    <property type="entry name" value="Histone-like_p6"/>
</dbReference>
<dbReference type="Pfam" id="PF17548">
    <property type="entry name" value="p6"/>
    <property type="match status" value="1"/>
</dbReference>